<gene>
    <name type="primary">gdh</name>
    <name type="ordered locus">TTX_0329</name>
</gene>
<comment type="function">
    <text evidence="2">Catalyzes the NAD(P)(+)-dependent oxidation of D-glucose to D-gluconate via gluconolactone. To a lesser extent, is also active with xylose as substrate, but mannose, arabinose, galactose, fructose 6-phosphate, glucose 6-phosphate, glycerinaldehyde 3-phosphate, ribose, sorbitol, ethanol, erythritol, or lactose are not oxidized by the enzyme. Can utilize both NAD(+) and NADP(+) as electron acceptor, with a marked preference for NADP(+). Is involved in the degradation of glucose through a non-phosphorylative variant of the Entner-Doudoroff pathway.</text>
</comment>
<comment type="catalytic activity">
    <reaction evidence="2">
        <text>D-glucose + NAD(+) = D-glucono-1,5-lactone + NADH + H(+)</text>
        <dbReference type="Rhea" id="RHEA:14293"/>
        <dbReference type="ChEBI" id="CHEBI:4167"/>
        <dbReference type="ChEBI" id="CHEBI:15378"/>
        <dbReference type="ChEBI" id="CHEBI:16217"/>
        <dbReference type="ChEBI" id="CHEBI:57540"/>
        <dbReference type="ChEBI" id="CHEBI:57945"/>
        <dbReference type="EC" id="1.1.1.47"/>
    </reaction>
</comment>
<comment type="catalytic activity">
    <reaction evidence="2">
        <text>D-glucose + NADP(+) = D-glucono-1,5-lactone + NADPH + H(+)</text>
        <dbReference type="Rhea" id="RHEA:14405"/>
        <dbReference type="ChEBI" id="CHEBI:4167"/>
        <dbReference type="ChEBI" id="CHEBI:15378"/>
        <dbReference type="ChEBI" id="CHEBI:16217"/>
        <dbReference type="ChEBI" id="CHEBI:57783"/>
        <dbReference type="ChEBI" id="CHEBI:58349"/>
        <dbReference type="EC" id="1.1.1.47"/>
    </reaction>
</comment>
<comment type="cofactor">
    <cofactor evidence="1">
        <name>Zn(2+)</name>
        <dbReference type="ChEBI" id="CHEBI:29105"/>
    </cofactor>
</comment>
<comment type="biophysicochemical properties">
    <kinetics>
        <KM evidence="2">0.3 mM for glucose (in the presence of NADP(+), at 70 degrees Celsius and pH 7)</KM>
        <KM evidence="2">8 mM for xylose (in the presence of NADP(+), at 70 degrees Celsius and pH 7)</KM>
        <KM evidence="2">0.7 mM for NADP(+) (at 70 degrees Celsius and pH 7)</KM>
        <KM evidence="2">86 mM for NAD(+) (at 70 degrees Celsius and pH 7)</KM>
        <Vmax evidence="2">40.0 umol/min/mg enzyme for the oxidation of D-glucose by NADP(+) (at 70 degrees Celsius and pH 7)</Vmax>
        <Vmax evidence="2">150.0 umol/min/mg enzyme for the oxidation of D-glucose by NAD(+) (at 70 degrees Celsius and pH 7)</Vmax>
        <Vmax evidence="2">60.0 umol/min/mg enzyme for the oxidation of D-xylose by NADP(+) (at 70 degrees Celsius and pH 7)</Vmax>
    </kinetics>
    <temperatureDependence>
        <text evidence="2">Highly thermostable with a half-life of inactivation of 10 minutes at 103 degrees Celsius.</text>
    </temperatureDependence>
</comment>
<comment type="subunit">
    <text evidence="2">Homodimer.</text>
</comment>
<comment type="similarity">
    <text evidence="3">Belongs to the zinc-containing alcohol dehydrogenase family. Glucose 1-dehydrogenase subfamily.</text>
</comment>
<feature type="chain" id="PRO_0000414843" description="Glucose 1-dehydrogenase">
    <location>
        <begin position="1"/>
        <end position="347"/>
    </location>
</feature>
<feature type="binding site" evidence="1">
    <location>
        <position position="39"/>
    </location>
    <ligand>
        <name>Zn(2+)</name>
        <dbReference type="ChEBI" id="CHEBI:29105"/>
        <note>catalytic</note>
    </ligand>
</feature>
<feature type="binding site" evidence="1">
    <location>
        <position position="41"/>
    </location>
    <ligand>
        <name>substrate</name>
    </ligand>
</feature>
<feature type="binding site" evidence="1">
    <location>
        <position position="64"/>
    </location>
    <ligand>
        <name>Zn(2+)</name>
        <dbReference type="ChEBI" id="CHEBI:29105"/>
        <note>catalytic</note>
    </ligand>
</feature>
<feature type="binding site" evidence="1">
    <location>
        <position position="65"/>
    </location>
    <ligand>
        <name>Zn(2+)</name>
        <dbReference type="ChEBI" id="CHEBI:29105"/>
        <note>catalytic</note>
    </ligand>
</feature>
<feature type="binding site" evidence="1">
    <location>
        <position position="110"/>
    </location>
    <ligand>
        <name>substrate</name>
    </ligand>
</feature>
<feature type="binding site" evidence="1">
    <location>
        <position position="146"/>
    </location>
    <ligand>
        <name>substrate</name>
    </ligand>
</feature>
<feature type="binding site" evidence="1">
    <location>
        <position position="146"/>
    </location>
    <ligand>
        <name>Zn(2+)</name>
        <dbReference type="ChEBI" id="CHEBI:29105"/>
        <note>catalytic</note>
    </ligand>
</feature>
<feature type="binding site" evidence="1">
    <location>
        <begin position="178"/>
        <end position="181"/>
    </location>
    <ligand>
        <name>NADP(+)</name>
        <dbReference type="ChEBI" id="CHEBI:58349"/>
    </ligand>
</feature>
<feature type="binding site" evidence="1">
    <location>
        <begin position="260"/>
        <end position="262"/>
    </location>
    <ligand>
        <name>NADP(+)</name>
        <dbReference type="ChEBI" id="CHEBI:58349"/>
    </ligand>
</feature>
<feature type="binding site" evidence="1">
    <location>
        <begin position="289"/>
        <end position="291"/>
    </location>
    <ligand>
        <name>NADP(+)</name>
        <dbReference type="ChEBI" id="CHEBI:58349"/>
    </ligand>
</feature>
<feature type="binding site" evidence="1">
    <location>
        <position position="291"/>
    </location>
    <ligand>
        <name>substrate</name>
    </ligand>
</feature>
<reference key="1">
    <citation type="journal article" date="2004" name="J. Bacteriol.">
        <title>Reconstruction of the central carbohydrate metabolism of Thermoproteus tenax using genomic and biochemical data.</title>
        <authorList>
            <person name="Siebers B."/>
            <person name="Tjaden B."/>
            <person name="Michalke K."/>
            <person name="Doerr C."/>
            <person name="Ahmed H."/>
            <person name="Zaparty M."/>
            <person name="Gordon P."/>
            <person name="Sensen C.W."/>
            <person name="Zibat A."/>
            <person name="Klenk H.-P."/>
            <person name="Schuster S.C."/>
            <person name="Hensel R."/>
        </authorList>
    </citation>
    <scope>NUCLEOTIDE SEQUENCE [GENOMIC DNA]</scope>
    <source>
        <strain>ATCC 35583 / DSM 2078 / JCM 9277 / NBRC 100435 / Kra 1</strain>
    </source>
</reference>
<reference key="2">
    <citation type="journal article" date="2011" name="PLoS ONE">
        <title>The complete genome sequence of Thermoproteus tenax: a physiologically versatile member of the Crenarchaeota.</title>
        <authorList>
            <person name="Siebers B."/>
            <person name="Zaparty M."/>
            <person name="Raddatz G."/>
            <person name="Tjaden B."/>
            <person name="Albers S.V."/>
            <person name="Bell S.D."/>
            <person name="Blombach F."/>
            <person name="Kletzin A."/>
            <person name="Kyrpides N."/>
            <person name="Lanz C."/>
            <person name="Plagens A."/>
            <person name="Rampp M."/>
            <person name="Rosinus A."/>
            <person name="von Jan M."/>
            <person name="Makarova K.S."/>
            <person name="Klenk H.P."/>
            <person name="Schuster S.C."/>
            <person name="Hensel R."/>
        </authorList>
    </citation>
    <scope>NUCLEOTIDE SEQUENCE [LARGE SCALE GENOMIC DNA]</scope>
    <source>
        <strain>ATCC 35583 / DSM 2078 / JCM 9277 / NBRC 100435 / Kra 1</strain>
    </source>
</reference>
<reference key="3">
    <citation type="journal article" date="1997" name="Arch. Microbiol.">
        <title>Carbohydrate metabolism in Thermoproteus tenax: in vivo utilization of the non-phosphorylative Entner-Doudoroff pathway and characterization of its first enzyme, glucose dehydrogenase.</title>
        <authorList>
            <person name="Siebers B."/>
            <person name="Wendisch V.F."/>
            <person name="Hensel R."/>
        </authorList>
    </citation>
    <scope>PROTEIN SEQUENCE OF 1-29</scope>
    <scope>FUNCTION</scope>
    <scope>CATALYTIC ACTIVITY</scope>
    <scope>SUBSTRATE SPECIFICITY</scope>
    <scope>BIOPHYSICOCHEMICAL PROPERTIES</scope>
    <scope>SUBUNIT</scope>
    <source>
        <strain>ATCC 35583 / DSM 2078 / JCM 9277 / NBRC 100435 / Kra 1</strain>
    </source>
</reference>
<organism>
    <name type="scientific">Thermoproteus tenax (strain ATCC 35583 / DSM 2078 / JCM 9277 / NBRC 100435 / Kra 1)</name>
    <dbReference type="NCBI Taxonomy" id="768679"/>
    <lineage>
        <taxon>Archaea</taxon>
        <taxon>Thermoproteota</taxon>
        <taxon>Thermoprotei</taxon>
        <taxon>Thermoproteales</taxon>
        <taxon>Thermoproteaceae</taxon>
        <taxon>Thermoproteus</taxon>
    </lineage>
</organism>
<sequence>MRAVTVTPGVPESLRLREVPEPKPGPGQVLLKPLLVGVCGTDKEIIEGRYGKAPEGSDYLILGHEALAEVAALGKGVDNVSEGDLVVPTVRRPLDCQLPVDYCPPGKYLEHGIWGLHGHAAELSITDAAYLVKVPKELRDIAVLTEPLSVVEKGVELGVESYKARLGSPPKTALVLGAGPVGLLASMVLRLMGVSITAVATRPHDSLKARLVEELGGRYIDAVHERLEGEFDLVIEATGAPSLAVQGLERLAPGGVEVLLGVYPPTGELKGLGSLLTDAVLKNKLVVGSVNAGLRHFERALAHLKEANDSLNGFPKRLITKVVPLERYQEAYVWTHDDIKVVLQVQT</sequence>
<protein>
    <recommendedName>
        <fullName>Glucose 1-dehydrogenase</fullName>
        <shortName>GDH</shortName>
        <shortName>GlcDH</shortName>
        <ecNumber>1.1.1.47</ecNumber>
    </recommendedName>
</protein>
<accession>Q703W7</accession>
<accession>G4RN61</accession>
<evidence type="ECO:0000250" key="1"/>
<evidence type="ECO:0000269" key="2">
    <source>
    </source>
</evidence>
<evidence type="ECO:0000305" key="3"/>
<name>GLCDH_THETK</name>
<keyword id="KW-0119">Carbohydrate metabolism</keyword>
<keyword id="KW-0903">Direct protein sequencing</keyword>
<keyword id="KW-0479">Metal-binding</keyword>
<keyword id="KW-0520">NAD</keyword>
<keyword id="KW-0521">NADP</keyword>
<keyword id="KW-0547">Nucleotide-binding</keyword>
<keyword id="KW-0560">Oxidoreductase</keyword>
<keyword id="KW-1185">Reference proteome</keyword>
<keyword id="KW-0862">Zinc</keyword>
<dbReference type="EC" id="1.1.1.47"/>
<dbReference type="EMBL" id="AJ621346">
    <property type="protein sequence ID" value="CAF18527.1"/>
    <property type="molecule type" value="Genomic_DNA"/>
</dbReference>
<dbReference type="EMBL" id="FN869859">
    <property type="protein sequence ID" value="CCC81005.1"/>
    <property type="molecule type" value="Genomic_DNA"/>
</dbReference>
<dbReference type="RefSeq" id="WP_014126262.1">
    <property type="nucleotide sequence ID" value="NC_016070.1"/>
</dbReference>
<dbReference type="SMR" id="Q703W7"/>
<dbReference type="STRING" id="768679.TTX_0329"/>
<dbReference type="PaxDb" id="768679-TTX_0329"/>
<dbReference type="GeneID" id="11263340"/>
<dbReference type="KEGG" id="ttn:TTX_0329"/>
<dbReference type="PATRIC" id="fig|768679.9.peg.347"/>
<dbReference type="eggNOG" id="arCOG01459">
    <property type="taxonomic scope" value="Archaea"/>
</dbReference>
<dbReference type="HOGENOM" id="CLU_026673_1_0_2"/>
<dbReference type="OrthoDB" id="41394at2157"/>
<dbReference type="Proteomes" id="UP000002654">
    <property type="component" value="Chromosome"/>
</dbReference>
<dbReference type="GO" id="GO:0005536">
    <property type="term" value="F:D-glucose binding"/>
    <property type="evidence" value="ECO:0000314"/>
    <property type="project" value="UniProtKB"/>
</dbReference>
<dbReference type="GO" id="GO:0047934">
    <property type="term" value="F:glucose 1-dehydrogenase (NAD+) activity"/>
    <property type="evidence" value="ECO:0007669"/>
    <property type="project" value="RHEA"/>
</dbReference>
<dbReference type="GO" id="GO:0047935">
    <property type="term" value="F:glucose 1-dehydrogenase (NADP+) activity"/>
    <property type="evidence" value="ECO:0007669"/>
    <property type="project" value="RHEA"/>
</dbReference>
<dbReference type="GO" id="GO:0047936">
    <property type="term" value="F:glucose 1-dehydrogenase [NAD(P)+] activity"/>
    <property type="evidence" value="ECO:0000314"/>
    <property type="project" value="UniProtKB"/>
</dbReference>
<dbReference type="GO" id="GO:0070403">
    <property type="term" value="F:NAD+ binding"/>
    <property type="evidence" value="ECO:0000314"/>
    <property type="project" value="UniProtKB"/>
</dbReference>
<dbReference type="GO" id="GO:0070401">
    <property type="term" value="F:NADP+ binding"/>
    <property type="evidence" value="ECO:0000314"/>
    <property type="project" value="UniProtKB"/>
</dbReference>
<dbReference type="GO" id="GO:0042803">
    <property type="term" value="F:protein homodimerization activity"/>
    <property type="evidence" value="ECO:0000314"/>
    <property type="project" value="UniProtKB"/>
</dbReference>
<dbReference type="GO" id="GO:0033222">
    <property type="term" value="F:xylose binding"/>
    <property type="evidence" value="ECO:0000314"/>
    <property type="project" value="UniProtKB"/>
</dbReference>
<dbReference type="GO" id="GO:0008270">
    <property type="term" value="F:zinc ion binding"/>
    <property type="evidence" value="ECO:0007669"/>
    <property type="project" value="UniProtKB-UniRule"/>
</dbReference>
<dbReference type="GO" id="GO:0019595">
    <property type="term" value="P:non-phosphorylated glucose catabolic process"/>
    <property type="evidence" value="ECO:0000314"/>
    <property type="project" value="UniProtKB"/>
</dbReference>
<dbReference type="CDD" id="cd08230">
    <property type="entry name" value="glucose_DH"/>
    <property type="match status" value="1"/>
</dbReference>
<dbReference type="Gene3D" id="3.90.180.10">
    <property type="entry name" value="Medium-chain alcohol dehydrogenases, catalytic domain"/>
    <property type="match status" value="1"/>
</dbReference>
<dbReference type="Gene3D" id="3.40.50.720">
    <property type="entry name" value="NAD(P)-binding Rossmann-like Domain"/>
    <property type="match status" value="1"/>
</dbReference>
<dbReference type="HAMAP" id="MF_02127">
    <property type="entry name" value="Glucose_DH"/>
    <property type="match status" value="1"/>
</dbReference>
<dbReference type="InterPro" id="IPR013154">
    <property type="entry name" value="ADH-like_N"/>
</dbReference>
<dbReference type="InterPro" id="IPR026583">
    <property type="entry name" value="Glc_1-DH_arc"/>
</dbReference>
<dbReference type="InterPro" id="IPR031640">
    <property type="entry name" value="Glu_dehyd_C"/>
</dbReference>
<dbReference type="InterPro" id="IPR011032">
    <property type="entry name" value="GroES-like_sf"/>
</dbReference>
<dbReference type="InterPro" id="IPR036291">
    <property type="entry name" value="NAD(P)-bd_dom_sf"/>
</dbReference>
<dbReference type="PANTHER" id="PTHR43189:SF2">
    <property type="entry name" value="GLUCOSE 1-DEHYDROGENASE"/>
    <property type="match status" value="1"/>
</dbReference>
<dbReference type="PANTHER" id="PTHR43189">
    <property type="entry name" value="ZINC-TYPE ALCOHOL DEHYDROGENASE-LIKE PROTEIN C1198.01-RELATED"/>
    <property type="match status" value="1"/>
</dbReference>
<dbReference type="Pfam" id="PF08240">
    <property type="entry name" value="ADH_N"/>
    <property type="match status" value="1"/>
</dbReference>
<dbReference type="Pfam" id="PF16912">
    <property type="entry name" value="Glu_dehyd_C"/>
    <property type="match status" value="1"/>
</dbReference>
<dbReference type="SUPFAM" id="SSF50129">
    <property type="entry name" value="GroES-like"/>
    <property type="match status" value="1"/>
</dbReference>
<dbReference type="SUPFAM" id="SSF51735">
    <property type="entry name" value="NAD(P)-binding Rossmann-fold domains"/>
    <property type="match status" value="1"/>
</dbReference>
<proteinExistence type="evidence at protein level"/>